<evidence type="ECO:0000255" key="1">
    <source>
        <dbReference type="HAMAP-Rule" id="MF_00176"/>
    </source>
</evidence>
<dbReference type="EC" id="6.1.1.11" evidence="1"/>
<dbReference type="EMBL" id="AE017263">
    <property type="protein sequence ID" value="AAT75373.1"/>
    <property type="molecule type" value="Genomic_DNA"/>
</dbReference>
<dbReference type="RefSeq" id="WP_011182914.1">
    <property type="nucleotide sequence ID" value="NC_006055.1"/>
</dbReference>
<dbReference type="RefSeq" id="YP_053257.1">
    <property type="nucleotide sequence ID" value="NC_006055.1"/>
</dbReference>
<dbReference type="SMR" id="Q6F2A0"/>
<dbReference type="STRING" id="265311.Mfl017"/>
<dbReference type="PaxDb" id="265311-Mfl017"/>
<dbReference type="EnsemblBacteria" id="AAT75373">
    <property type="protein sequence ID" value="AAT75373"/>
    <property type="gene ID" value="Mfl017"/>
</dbReference>
<dbReference type="GeneID" id="2898085"/>
<dbReference type="KEGG" id="mfl:Mfl017"/>
<dbReference type="PATRIC" id="fig|265311.5.peg.17"/>
<dbReference type="eggNOG" id="COG0172">
    <property type="taxonomic scope" value="Bacteria"/>
</dbReference>
<dbReference type="HOGENOM" id="CLU_023797_0_1_14"/>
<dbReference type="OrthoDB" id="9804647at2"/>
<dbReference type="UniPathway" id="UPA00906">
    <property type="reaction ID" value="UER00895"/>
</dbReference>
<dbReference type="Proteomes" id="UP000006647">
    <property type="component" value="Chromosome"/>
</dbReference>
<dbReference type="GO" id="GO:0005737">
    <property type="term" value="C:cytoplasm"/>
    <property type="evidence" value="ECO:0007669"/>
    <property type="project" value="UniProtKB-SubCell"/>
</dbReference>
<dbReference type="GO" id="GO:0005524">
    <property type="term" value="F:ATP binding"/>
    <property type="evidence" value="ECO:0007669"/>
    <property type="project" value="UniProtKB-UniRule"/>
</dbReference>
<dbReference type="GO" id="GO:0004828">
    <property type="term" value="F:serine-tRNA ligase activity"/>
    <property type="evidence" value="ECO:0007669"/>
    <property type="project" value="UniProtKB-UniRule"/>
</dbReference>
<dbReference type="GO" id="GO:0016260">
    <property type="term" value="P:selenocysteine biosynthetic process"/>
    <property type="evidence" value="ECO:0007669"/>
    <property type="project" value="UniProtKB-UniRule"/>
</dbReference>
<dbReference type="GO" id="GO:0006434">
    <property type="term" value="P:seryl-tRNA aminoacylation"/>
    <property type="evidence" value="ECO:0007669"/>
    <property type="project" value="UniProtKB-UniRule"/>
</dbReference>
<dbReference type="CDD" id="cd00770">
    <property type="entry name" value="SerRS_core"/>
    <property type="match status" value="1"/>
</dbReference>
<dbReference type="Gene3D" id="3.30.930.10">
    <property type="entry name" value="Bira Bifunctional Protein, Domain 2"/>
    <property type="match status" value="1"/>
</dbReference>
<dbReference type="Gene3D" id="1.10.287.40">
    <property type="entry name" value="Serine-tRNA synthetase, tRNA binding domain"/>
    <property type="match status" value="1"/>
</dbReference>
<dbReference type="HAMAP" id="MF_00176">
    <property type="entry name" value="Ser_tRNA_synth_type1"/>
    <property type="match status" value="1"/>
</dbReference>
<dbReference type="InterPro" id="IPR002314">
    <property type="entry name" value="aa-tRNA-synt_IIb"/>
</dbReference>
<dbReference type="InterPro" id="IPR006195">
    <property type="entry name" value="aa-tRNA-synth_II"/>
</dbReference>
<dbReference type="InterPro" id="IPR045864">
    <property type="entry name" value="aa-tRNA-synth_II/BPL/LPL"/>
</dbReference>
<dbReference type="InterPro" id="IPR002317">
    <property type="entry name" value="Ser-tRNA-ligase_type_1"/>
</dbReference>
<dbReference type="InterPro" id="IPR015866">
    <property type="entry name" value="Ser-tRNA-synth_1_N"/>
</dbReference>
<dbReference type="InterPro" id="IPR042103">
    <property type="entry name" value="SerRS_1_N_sf"/>
</dbReference>
<dbReference type="InterPro" id="IPR033729">
    <property type="entry name" value="SerRS_core"/>
</dbReference>
<dbReference type="InterPro" id="IPR010978">
    <property type="entry name" value="tRNA-bd_arm"/>
</dbReference>
<dbReference type="NCBIfam" id="TIGR00414">
    <property type="entry name" value="serS"/>
    <property type="match status" value="1"/>
</dbReference>
<dbReference type="PANTHER" id="PTHR43697:SF1">
    <property type="entry name" value="SERINE--TRNA LIGASE"/>
    <property type="match status" value="1"/>
</dbReference>
<dbReference type="PANTHER" id="PTHR43697">
    <property type="entry name" value="SERYL-TRNA SYNTHETASE"/>
    <property type="match status" value="1"/>
</dbReference>
<dbReference type="Pfam" id="PF02403">
    <property type="entry name" value="Seryl_tRNA_N"/>
    <property type="match status" value="1"/>
</dbReference>
<dbReference type="Pfam" id="PF00587">
    <property type="entry name" value="tRNA-synt_2b"/>
    <property type="match status" value="1"/>
</dbReference>
<dbReference type="PIRSF" id="PIRSF001529">
    <property type="entry name" value="Ser-tRNA-synth_IIa"/>
    <property type="match status" value="1"/>
</dbReference>
<dbReference type="PRINTS" id="PR00981">
    <property type="entry name" value="TRNASYNTHSER"/>
</dbReference>
<dbReference type="SUPFAM" id="SSF55681">
    <property type="entry name" value="Class II aaRS and biotin synthetases"/>
    <property type="match status" value="1"/>
</dbReference>
<dbReference type="SUPFAM" id="SSF46589">
    <property type="entry name" value="tRNA-binding arm"/>
    <property type="match status" value="1"/>
</dbReference>
<dbReference type="PROSITE" id="PS50862">
    <property type="entry name" value="AA_TRNA_LIGASE_II"/>
    <property type="match status" value="1"/>
</dbReference>
<feature type="chain" id="PRO_0000122076" description="Serine--tRNA ligase">
    <location>
        <begin position="1"/>
        <end position="422"/>
    </location>
</feature>
<feature type="binding site" evidence="1">
    <location>
        <begin position="231"/>
        <end position="233"/>
    </location>
    <ligand>
        <name>L-serine</name>
        <dbReference type="ChEBI" id="CHEBI:33384"/>
    </ligand>
</feature>
<feature type="binding site" evidence="1">
    <location>
        <begin position="262"/>
        <end position="264"/>
    </location>
    <ligand>
        <name>ATP</name>
        <dbReference type="ChEBI" id="CHEBI:30616"/>
    </ligand>
</feature>
<feature type="binding site" evidence="1">
    <location>
        <position position="285"/>
    </location>
    <ligand>
        <name>L-serine</name>
        <dbReference type="ChEBI" id="CHEBI:33384"/>
    </ligand>
</feature>
<feature type="binding site" evidence="1">
    <location>
        <begin position="349"/>
        <end position="352"/>
    </location>
    <ligand>
        <name>ATP</name>
        <dbReference type="ChEBI" id="CHEBI:30616"/>
    </ligand>
</feature>
<feature type="binding site" evidence="1">
    <location>
        <position position="384"/>
    </location>
    <ligand>
        <name>L-serine</name>
        <dbReference type="ChEBI" id="CHEBI:33384"/>
    </ligand>
</feature>
<gene>
    <name evidence="1" type="primary">serS</name>
    <name type="ordered locus">Mfl017</name>
</gene>
<reference key="1">
    <citation type="submission" date="2004-06" db="EMBL/GenBank/DDBJ databases">
        <authorList>
            <person name="Birren B.W."/>
            <person name="Stange-Thomann N."/>
            <person name="Hafez N."/>
            <person name="DeCaprio D."/>
            <person name="Fisher S."/>
            <person name="Butler J."/>
            <person name="Elkins T."/>
            <person name="Kodira C.D."/>
            <person name="Major J."/>
            <person name="Wang S."/>
            <person name="Nicol R."/>
            <person name="Nusbaum C."/>
        </authorList>
    </citation>
    <scope>NUCLEOTIDE SEQUENCE [LARGE SCALE GENOMIC DNA]</scope>
    <source>
        <strain>ATCC 33453 / NBRC 100688 / NCTC 11704 / L1</strain>
    </source>
</reference>
<name>SYS_MESFL</name>
<proteinExistence type="inferred from homology"/>
<accession>Q6F2A0</accession>
<organism>
    <name type="scientific">Mesoplasma florum (strain ATCC 33453 / NBRC 100688 / NCTC 11704 / L1)</name>
    <name type="common">Acholeplasma florum</name>
    <dbReference type="NCBI Taxonomy" id="265311"/>
    <lineage>
        <taxon>Bacteria</taxon>
        <taxon>Bacillati</taxon>
        <taxon>Mycoplasmatota</taxon>
        <taxon>Mollicutes</taxon>
        <taxon>Entomoplasmatales</taxon>
        <taxon>Entomoplasmataceae</taxon>
        <taxon>Mesoplasma</taxon>
    </lineage>
</organism>
<comment type="function">
    <text evidence="1">Catalyzes the attachment of serine to tRNA(Ser). Is also able to aminoacylate tRNA(Sec) with serine, to form the misacylated tRNA L-seryl-tRNA(Sec), which will be further converted into selenocysteinyl-tRNA(Sec).</text>
</comment>
<comment type="catalytic activity">
    <reaction evidence="1">
        <text>tRNA(Ser) + L-serine + ATP = L-seryl-tRNA(Ser) + AMP + diphosphate + H(+)</text>
        <dbReference type="Rhea" id="RHEA:12292"/>
        <dbReference type="Rhea" id="RHEA-COMP:9669"/>
        <dbReference type="Rhea" id="RHEA-COMP:9703"/>
        <dbReference type="ChEBI" id="CHEBI:15378"/>
        <dbReference type="ChEBI" id="CHEBI:30616"/>
        <dbReference type="ChEBI" id="CHEBI:33019"/>
        <dbReference type="ChEBI" id="CHEBI:33384"/>
        <dbReference type="ChEBI" id="CHEBI:78442"/>
        <dbReference type="ChEBI" id="CHEBI:78533"/>
        <dbReference type="ChEBI" id="CHEBI:456215"/>
        <dbReference type="EC" id="6.1.1.11"/>
    </reaction>
</comment>
<comment type="catalytic activity">
    <reaction evidence="1">
        <text>tRNA(Sec) + L-serine + ATP = L-seryl-tRNA(Sec) + AMP + diphosphate + H(+)</text>
        <dbReference type="Rhea" id="RHEA:42580"/>
        <dbReference type="Rhea" id="RHEA-COMP:9742"/>
        <dbReference type="Rhea" id="RHEA-COMP:10128"/>
        <dbReference type="ChEBI" id="CHEBI:15378"/>
        <dbReference type="ChEBI" id="CHEBI:30616"/>
        <dbReference type="ChEBI" id="CHEBI:33019"/>
        <dbReference type="ChEBI" id="CHEBI:33384"/>
        <dbReference type="ChEBI" id="CHEBI:78442"/>
        <dbReference type="ChEBI" id="CHEBI:78533"/>
        <dbReference type="ChEBI" id="CHEBI:456215"/>
        <dbReference type="EC" id="6.1.1.11"/>
    </reaction>
</comment>
<comment type="pathway">
    <text evidence="1">Aminoacyl-tRNA biosynthesis; selenocysteinyl-tRNA(Sec) biosynthesis; L-seryl-tRNA(Sec) from L-serine and tRNA(Sec): step 1/1.</text>
</comment>
<comment type="subunit">
    <text evidence="1">Homodimer. The tRNA molecule binds across the dimer.</text>
</comment>
<comment type="subcellular location">
    <subcellularLocation>
        <location evidence="1">Cytoplasm</location>
    </subcellularLocation>
</comment>
<comment type="domain">
    <text evidence="1">Consists of two distinct domains, a catalytic core and a N-terminal extension that is involved in tRNA binding.</text>
</comment>
<comment type="similarity">
    <text evidence="1">Belongs to the class-II aminoacyl-tRNA synthetase family. Type-1 seryl-tRNA synthetase subfamily.</text>
</comment>
<protein>
    <recommendedName>
        <fullName evidence="1">Serine--tRNA ligase</fullName>
        <ecNumber evidence="1">6.1.1.11</ecNumber>
    </recommendedName>
    <alternativeName>
        <fullName evidence="1">Seryl-tRNA synthetase</fullName>
        <shortName evidence="1">SerRS</shortName>
    </alternativeName>
    <alternativeName>
        <fullName evidence="1">Seryl-tRNA(Ser/Sec) synthetase</fullName>
    </alternativeName>
</protein>
<sequence length="422" mass="47794">MLDINFIESNLVKVKEQLNKRSGDYSLIIDEAVELNVQRKSILKEVENLKANKNNLSKQVGELMRNKQSDEANKIKEEVTLINSKIEKLDDSLKLVQEQLTSKLQNIPNIPNDNMPIGNDDNDNVEVRQWGNELIKKHNTPHWDIADKLKLVDFEAGPKLSGSRFVVYTGLGAKLVRSLSNILLNLHTSKGYTEITVPLLVNPQAMYGTGQLPKFKEDAYITTNDQYLIPTGEVPLTNLHAGEILDLNQLPIHYTTYSQCFRQEAGSAGRDTKGLIRLHQFNKVELVKITNQESSEAELQAMVNDAEAVLQLFNLPYRVVELCTGDVGFSSSKTYDLEVWFPEQNKYREISSCSNCTDFQARNMQTRYRDANGEVKLAHTLNGSGVAIDRLIAAILENYWDGEKLILPTALKPYFDNKEYID</sequence>
<keyword id="KW-0030">Aminoacyl-tRNA synthetase</keyword>
<keyword id="KW-0067">ATP-binding</keyword>
<keyword id="KW-0963">Cytoplasm</keyword>
<keyword id="KW-0436">Ligase</keyword>
<keyword id="KW-0547">Nucleotide-binding</keyword>
<keyword id="KW-0648">Protein biosynthesis</keyword>
<keyword id="KW-1185">Reference proteome</keyword>